<feature type="chain" id="PRO_0000214988" description="UPF0154 protein SPy_0359/M5005_Spy0302">
    <location>
        <begin position="1"/>
        <end position="80"/>
    </location>
</feature>
<feature type="transmembrane region" description="Helical" evidence="1">
    <location>
        <begin position="4"/>
        <end position="24"/>
    </location>
</feature>
<proteinExistence type="inferred from homology"/>
<dbReference type="EMBL" id="AE004092">
    <property type="protein sequence ID" value="AAK33405.1"/>
    <property type="molecule type" value="Genomic_DNA"/>
</dbReference>
<dbReference type="EMBL" id="CP000017">
    <property type="protein sequence ID" value="AAZ50921.1"/>
    <property type="molecule type" value="Genomic_DNA"/>
</dbReference>
<dbReference type="RefSeq" id="NP_268684.1">
    <property type="nucleotide sequence ID" value="NC_002737.2"/>
</dbReference>
<dbReference type="SMR" id="P67295"/>
<dbReference type="PaxDb" id="1314-HKU360_00338"/>
<dbReference type="KEGG" id="spy:SPy_0359"/>
<dbReference type="KEGG" id="spz:M5005_Spy0302"/>
<dbReference type="PATRIC" id="fig|160490.10.peg.310"/>
<dbReference type="HOGENOM" id="CLU_180108_0_0_9"/>
<dbReference type="OMA" id="PISEEMM"/>
<dbReference type="Proteomes" id="UP000000750">
    <property type="component" value="Chromosome"/>
</dbReference>
<dbReference type="GO" id="GO:0005886">
    <property type="term" value="C:plasma membrane"/>
    <property type="evidence" value="ECO:0007669"/>
    <property type="project" value="UniProtKB-UniRule"/>
</dbReference>
<dbReference type="HAMAP" id="MF_00363">
    <property type="entry name" value="UPF0154"/>
    <property type="match status" value="1"/>
</dbReference>
<dbReference type="InterPro" id="IPR005359">
    <property type="entry name" value="UPF0154"/>
</dbReference>
<dbReference type="Pfam" id="PF03672">
    <property type="entry name" value="UPF0154"/>
    <property type="match status" value="1"/>
</dbReference>
<evidence type="ECO:0000255" key="1">
    <source>
        <dbReference type="HAMAP-Rule" id="MF_00363"/>
    </source>
</evidence>
<comment type="subcellular location">
    <subcellularLocation>
        <location evidence="1">Membrane</location>
        <topology evidence="1">Single-pass membrane protein</topology>
    </subcellularLocation>
</comment>
<comment type="similarity">
    <text evidence="1">Belongs to the UPF0154 family.</text>
</comment>
<sequence length="80" mass="8894">MSTAIWILLLIVALGVGVFGGIFIARKQIEKEIGEHPRLTPEAIREMMSQMGQKPSEAKIQQTYRNIIKQSKAAVSKGKK</sequence>
<gene>
    <name type="ordered locus">SPy_0359</name>
    <name type="ordered locus">M5005_Spy0302</name>
</gene>
<keyword id="KW-0472">Membrane</keyword>
<keyword id="KW-1185">Reference proteome</keyword>
<keyword id="KW-0812">Transmembrane</keyword>
<keyword id="KW-1133">Transmembrane helix</keyword>
<name>Y359_STRP1</name>
<protein>
    <recommendedName>
        <fullName evidence="1">UPF0154 protein SPy_0359/M5005_Spy0302</fullName>
    </recommendedName>
</protein>
<organism>
    <name type="scientific">Streptococcus pyogenes serotype M1</name>
    <dbReference type="NCBI Taxonomy" id="301447"/>
    <lineage>
        <taxon>Bacteria</taxon>
        <taxon>Bacillati</taxon>
        <taxon>Bacillota</taxon>
        <taxon>Bacilli</taxon>
        <taxon>Lactobacillales</taxon>
        <taxon>Streptococcaceae</taxon>
        <taxon>Streptococcus</taxon>
    </lineage>
</organism>
<accession>P67295</accession>
<accession>Q490P7</accession>
<accession>Q9A1B8</accession>
<reference key="1">
    <citation type="journal article" date="2001" name="Proc. Natl. Acad. Sci. U.S.A.">
        <title>Complete genome sequence of an M1 strain of Streptococcus pyogenes.</title>
        <authorList>
            <person name="Ferretti J.J."/>
            <person name="McShan W.M."/>
            <person name="Ajdic D.J."/>
            <person name="Savic D.J."/>
            <person name="Savic G."/>
            <person name="Lyon K."/>
            <person name="Primeaux C."/>
            <person name="Sezate S."/>
            <person name="Suvorov A.N."/>
            <person name="Kenton S."/>
            <person name="Lai H.S."/>
            <person name="Lin S.P."/>
            <person name="Qian Y."/>
            <person name="Jia H.G."/>
            <person name="Najar F.Z."/>
            <person name="Ren Q."/>
            <person name="Zhu H."/>
            <person name="Song L."/>
            <person name="White J."/>
            <person name="Yuan X."/>
            <person name="Clifton S.W."/>
            <person name="Roe B.A."/>
            <person name="McLaughlin R.E."/>
        </authorList>
    </citation>
    <scope>NUCLEOTIDE SEQUENCE [LARGE SCALE GENOMIC DNA]</scope>
    <source>
        <strain>ATCC 700294 / SF370 / Serotype M1</strain>
    </source>
</reference>
<reference key="2">
    <citation type="journal article" date="2005" name="J. Infect. Dis.">
        <title>Evolutionary origin and emergence of a highly successful clone of serotype M1 group A Streptococcus involved multiple horizontal gene transfer events.</title>
        <authorList>
            <person name="Sumby P."/>
            <person name="Porcella S.F."/>
            <person name="Madrigal A.G."/>
            <person name="Barbian K.D."/>
            <person name="Virtaneva K."/>
            <person name="Ricklefs S.M."/>
            <person name="Sturdevant D.E."/>
            <person name="Graham M.R."/>
            <person name="Vuopio-Varkila J."/>
            <person name="Hoe N.P."/>
            <person name="Musser J.M."/>
        </authorList>
    </citation>
    <scope>NUCLEOTIDE SEQUENCE [LARGE SCALE GENOMIC DNA]</scope>
    <source>
        <strain>ATCC BAA-947 / MGAS5005 / Serotype M1</strain>
    </source>
</reference>